<name>MLH1_SCHPO</name>
<evidence type="ECO:0000250" key="1"/>
<evidence type="ECO:0000305" key="2"/>
<keyword id="KW-0227">DNA damage</keyword>
<keyword id="KW-0234">DNA repair</keyword>
<keyword id="KW-0539">Nucleus</keyword>
<keyword id="KW-1185">Reference proteome</keyword>
<dbReference type="EMBL" id="CU329671">
    <property type="protein sequence ID" value="CAB66448.1"/>
    <property type="molecule type" value="Genomic_DNA"/>
</dbReference>
<dbReference type="EMBL" id="D89212">
    <property type="protein sequence ID" value="BAA13873.1"/>
    <property type="status" value="ALT_FRAME"/>
    <property type="molecule type" value="mRNA"/>
</dbReference>
<dbReference type="PIR" id="T43016">
    <property type="entry name" value="T43016"/>
</dbReference>
<dbReference type="PIR" id="T50317">
    <property type="entry name" value="T50317"/>
</dbReference>
<dbReference type="RefSeq" id="NP_596199.1">
    <property type="nucleotide sequence ID" value="NM_001022118.2"/>
</dbReference>
<dbReference type="SMR" id="Q9P7W6"/>
<dbReference type="BioGRID" id="276493">
    <property type="interactions" value="43"/>
</dbReference>
<dbReference type="FunCoup" id="Q9P7W6">
    <property type="interactions" value="435"/>
</dbReference>
<dbReference type="STRING" id="284812.Q9P7W6"/>
<dbReference type="PaxDb" id="4896-SPBC1703.04.1"/>
<dbReference type="EnsemblFungi" id="SPBC1703.04.1">
    <property type="protein sequence ID" value="SPBC1703.04.1:pep"/>
    <property type="gene ID" value="SPBC1703.04"/>
</dbReference>
<dbReference type="GeneID" id="2539949"/>
<dbReference type="KEGG" id="spo:2539949"/>
<dbReference type="PomBase" id="SPBC1703.04">
    <property type="gene designation" value="mlh1"/>
</dbReference>
<dbReference type="VEuPathDB" id="FungiDB:SPBC1703.04"/>
<dbReference type="eggNOG" id="KOG1979">
    <property type="taxonomic scope" value="Eukaryota"/>
</dbReference>
<dbReference type="HOGENOM" id="CLU_004131_2_0_1"/>
<dbReference type="InParanoid" id="Q9P7W6"/>
<dbReference type="OMA" id="ANYHVKK"/>
<dbReference type="PhylomeDB" id="Q9P7W6"/>
<dbReference type="Reactome" id="R-SPO-5358565">
    <property type="pathway name" value="Mismatch repair (MMR) directed by MSH2:MSH6 (MutSalpha)"/>
</dbReference>
<dbReference type="PRO" id="PR:Q9P7W6"/>
<dbReference type="Proteomes" id="UP000002485">
    <property type="component" value="Chromosome II"/>
</dbReference>
<dbReference type="GO" id="GO:0005829">
    <property type="term" value="C:cytosol"/>
    <property type="evidence" value="ECO:0007005"/>
    <property type="project" value="PomBase"/>
</dbReference>
<dbReference type="GO" id="GO:0044732">
    <property type="term" value="C:mitotic spindle pole body"/>
    <property type="evidence" value="ECO:0007005"/>
    <property type="project" value="PomBase"/>
</dbReference>
<dbReference type="GO" id="GO:0032389">
    <property type="term" value="C:MutLalpha complex"/>
    <property type="evidence" value="ECO:0000318"/>
    <property type="project" value="GO_Central"/>
</dbReference>
<dbReference type="GO" id="GO:0005634">
    <property type="term" value="C:nucleus"/>
    <property type="evidence" value="ECO:0007005"/>
    <property type="project" value="PomBase"/>
</dbReference>
<dbReference type="GO" id="GO:0005524">
    <property type="term" value="F:ATP binding"/>
    <property type="evidence" value="ECO:0007669"/>
    <property type="project" value="InterPro"/>
</dbReference>
<dbReference type="GO" id="GO:0016887">
    <property type="term" value="F:ATP hydrolysis activity"/>
    <property type="evidence" value="ECO:0000318"/>
    <property type="project" value="GO_Central"/>
</dbReference>
<dbReference type="GO" id="GO:0140664">
    <property type="term" value="F:ATP-dependent DNA damage sensor activity"/>
    <property type="evidence" value="ECO:0007669"/>
    <property type="project" value="InterPro"/>
</dbReference>
<dbReference type="GO" id="GO:0030983">
    <property type="term" value="F:mismatched DNA binding"/>
    <property type="evidence" value="ECO:0007669"/>
    <property type="project" value="InterPro"/>
</dbReference>
<dbReference type="GO" id="GO:0061982">
    <property type="term" value="P:meiosis I cell cycle process"/>
    <property type="evidence" value="ECO:0007669"/>
    <property type="project" value="UniProtKB-ARBA"/>
</dbReference>
<dbReference type="GO" id="GO:0006298">
    <property type="term" value="P:mismatch repair"/>
    <property type="evidence" value="ECO:0000318"/>
    <property type="project" value="GO_Central"/>
</dbReference>
<dbReference type="CDD" id="cd16926">
    <property type="entry name" value="HATPase_MutL-MLH-PMS-like"/>
    <property type="match status" value="1"/>
</dbReference>
<dbReference type="CDD" id="cd03483">
    <property type="entry name" value="MutL_Trans_MLH1"/>
    <property type="match status" value="1"/>
</dbReference>
<dbReference type="FunFam" id="3.30.230.10:FF:000014">
    <property type="entry name" value="DNA mismatch repair protein Mlh1"/>
    <property type="match status" value="1"/>
</dbReference>
<dbReference type="FunFam" id="3.30.565.10:FF:000109">
    <property type="entry name" value="Related to MLH1-DNA mismatch repair protein"/>
    <property type="match status" value="1"/>
</dbReference>
<dbReference type="Gene3D" id="3.30.230.10">
    <property type="match status" value="1"/>
</dbReference>
<dbReference type="Gene3D" id="3.30.565.10">
    <property type="entry name" value="Histidine kinase-like ATPase, C-terminal domain"/>
    <property type="match status" value="1"/>
</dbReference>
<dbReference type="InterPro" id="IPR014762">
    <property type="entry name" value="DNA_mismatch_repair_CS"/>
</dbReference>
<dbReference type="InterPro" id="IPR013507">
    <property type="entry name" value="DNA_mismatch_S5_2-like"/>
</dbReference>
<dbReference type="InterPro" id="IPR036890">
    <property type="entry name" value="HATPase_C_sf"/>
</dbReference>
<dbReference type="InterPro" id="IPR032189">
    <property type="entry name" value="Mlh1_C"/>
</dbReference>
<dbReference type="InterPro" id="IPR002099">
    <property type="entry name" value="MutL/Mlh/PMS"/>
</dbReference>
<dbReference type="InterPro" id="IPR038973">
    <property type="entry name" value="MutL/Mlh/Pms-like"/>
</dbReference>
<dbReference type="InterPro" id="IPR020568">
    <property type="entry name" value="Ribosomal_Su5_D2-typ_SF"/>
</dbReference>
<dbReference type="InterPro" id="IPR014721">
    <property type="entry name" value="Ribsml_uS5_D2-typ_fold_subgr"/>
</dbReference>
<dbReference type="NCBIfam" id="TIGR00585">
    <property type="entry name" value="mutl"/>
    <property type="match status" value="1"/>
</dbReference>
<dbReference type="PANTHER" id="PTHR10073">
    <property type="entry name" value="DNA MISMATCH REPAIR PROTEIN MLH, PMS, MUTL"/>
    <property type="match status" value="1"/>
</dbReference>
<dbReference type="PANTHER" id="PTHR10073:SF12">
    <property type="entry name" value="DNA MISMATCH REPAIR PROTEIN MLH1"/>
    <property type="match status" value="1"/>
</dbReference>
<dbReference type="Pfam" id="PF01119">
    <property type="entry name" value="DNA_mis_repair"/>
    <property type="match status" value="1"/>
</dbReference>
<dbReference type="Pfam" id="PF13589">
    <property type="entry name" value="HATPase_c_3"/>
    <property type="match status" value="1"/>
</dbReference>
<dbReference type="Pfam" id="PF16413">
    <property type="entry name" value="Mlh1_C"/>
    <property type="match status" value="1"/>
</dbReference>
<dbReference type="SMART" id="SM01340">
    <property type="entry name" value="DNA_mis_repair"/>
    <property type="match status" value="1"/>
</dbReference>
<dbReference type="SUPFAM" id="SSF55874">
    <property type="entry name" value="ATPase domain of HSP90 chaperone/DNA topoisomerase II/histidine kinase"/>
    <property type="match status" value="1"/>
</dbReference>
<dbReference type="SUPFAM" id="SSF54211">
    <property type="entry name" value="Ribosomal protein S5 domain 2-like"/>
    <property type="match status" value="1"/>
</dbReference>
<dbReference type="PROSITE" id="PS00058">
    <property type="entry name" value="DNA_MISMATCH_REPAIR_1"/>
    <property type="match status" value="1"/>
</dbReference>
<sequence>MDVNSRAKIRPLDQLVINKIAAGEIIERPENAIKELIENSLDAGSTSIDVLLKDGGLKLLQITDNGSGIQYDDLPYLCQRFSTSKIDNFNDLQHLQTFGFRGEALASISHVAKVTVVTKLSSDIHAWKAFYVDGALAPISPGMSPAPQPCAGKQGTVITAEDLFYNVRSRKSALKNGSEEFRRIMILVQKYAIHNDQVSFNCKKVGDTVASLSLSSRLSKADKIRHIYGPRVASHLRDFSLGEGQSSIVGFSANGFISNADFQDKKSNLILFINNRLVESVELRHALEETYAKYLHKGASYFVYLSLNMSPEQLDVNVHPSKRIVHFLYDQEIATSICDKLGEILERTDTERSYPLQAMIPSISNTKNAESSSQKAVRTYENYLVRTDPRERSIKSMLSDNFLQRSSNNYDNEIIEKVDSANSNKNATNDIKDLQTEEIVEEGNSIDLESIKSLQKQVINSMHVLATNILTEHKYVGLVCPTRRIAAVQHNIGLYVVDYGKLSYHLFYQICLTEFGNYGEFVLETPLSISDLFEIVNGDEDKSESEKFTRLLVSRRDMLKDYFSISVTSGGLLTAVPMLSPKYHPPFEQLPLLISSLTPKFFDWLDEKSCLNGIMKAIAKFYVPLPLSYEESDVKSIRSLESCLEDYLFPEFRRRVICPKKVFEEKCIYQITSLPRLYNVFERC</sequence>
<gene>
    <name type="primary">mlh1</name>
    <name type="ORF">SPBC1703.04</name>
</gene>
<organism>
    <name type="scientific">Schizosaccharomyces pombe (strain 972 / ATCC 24843)</name>
    <name type="common">Fission yeast</name>
    <dbReference type="NCBI Taxonomy" id="284812"/>
    <lineage>
        <taxon>Eukaryota</taxon>
        <taxon>Fungi</taxon>
        <taxon>Dikarya</taxon>
        <taxon>Ascomycota</taxon>
        <taxon>Taphrinomycotina</taxon>
        <taxon>Schizosaccharomycetes</taxon>
        <taxon>Schizosaccharomycetales</taxon>
        <taxon>Schizosaccharomycetaceae</taxon>
        <taxon>Schizosaccharomyces</taxon>
    </lineage>
</organism>
<feature type="chain" id="PRO_0000178007" description="Putative MutL protein homolog 1">
    <location>
        <begin position="1"/>
        <end position="684"/>
    </location>
</feature>
<proteinExistence type="evidence at transcript level"/>
<protein>
    <recommendedName>
        <fullName>Putative MutL protein homolog 1</fullName>
    </recommendedName>
    <alternativeName>
        <fullName>DNA mismatch repair protein MLH1</fullName>
    </alternativeName>
</protein>
<comment type="function">
    <text evidence="1">This protein is involved in the repair of mismatches in DNA.</text>
</comment>
<comment type="subcellular location">
    <subcellularLocation>
        <location evidence="2">Nucleus</location>
    </subcellularLocation>
</comment>
<comment type="similarity">
    <text evidence="2">Belongs to the DNA mismatch repair MutL/HexB family.</text>
</comment>
<comment type="sequence caution" evidence="2">
    <conflict type="frameshift">
        <sequence resource="EMBL-CDS" id="BAA13873"/>
    </conflict>
</comment>
<reference key="1">
    <citation type="journal article" date="2002" name="Nature">
        <title>The genome sequence of Schizosaccharomyces pombe.</title>
        <authorList>
            <person name="Wood V."/>
            <person name="Gwilliam R."/>
            <person name="Rajandream M.A."/>
            <person name="Lyne M.H."/>
            <person name="Lyne R."/>
            <person name="Stewart A."/>
            <person name="Sgouros J.G."/>
            <person name="Peat N."/>
            <person name="Hayles J."/>
            <person name="Baker S.G."/>
            <person name="Basham D."/>
            <person name="Bowman S."/>
            <person name="Brooks K."/>
            <person name="Brown D."/>
            <person name="Brown S."/>
            <person name="Chillingworth T."/>
            <person name="Churcher C.M."/>
            <person name="Collins M."/>
            <person name="Connor R."/>
            <person name="Cronin A."/>
            <person name="Davis P."/>
            <person name="Feltwell T."/>
            <person name="Fraser A."/>
            <person name="Gentles S."/>
            <person name="Goble A."/>
            <person name="Hamlin N."/>
            <person name="Harris D.E."/>
            <person name="Hidalgo J."/>
            <person name="Hodgson G."/>
            <person name="Holroyd S."/>
            <person name="Hornsby T."/>
            <person name="Howarth S."/>
            <person name="Huckle E.J."/>
            <person name="Hunt S."/>
            <person name="Jagels K."/>
            <person name="James K.D."/>
            <person name="Jones L."/>
            <person name="Jones M."/>
            <person name="Leather S."/>
            <person name="McDonald S."/>
            <person name="McLean J."/>
            <person name="Mooney P."/>
            <person name="Moule S."/>
            <person name="Mungall K.L."/>
            <person name="Murphy L.D."/>
            <person name="Niblett D."/>
            <person name="Odell C."/>
            <person name="Oliver K."/>
            <person name="O'Neil S."/>
            <person name="Pearson D."/>
            <person name="Quail M.A."/>
            <person name="Rabbinowitsch E."/>
            <person name="Rutherford K.M."/>
            <person name="Rutter S."/>
            <person name="Saunders D."/>
            <person name="Seeger K."/>
            <person name="Sharp S."/>
            <person name="Skelton J."/>
            <person name="Simmonds M.N."/>
            <person name="Squares R."/>
            <person name="Squares S."/>
            <person name="Stevens K."/>
            <person name="Taylor K."/>
            <person name="Taylor R.G."/>
            <person name="Tivey A."/>
            <person name="Walsh S.V."/>
            <person name="Warren T."/>
            <person name="Whitehead S."/>
            <person name="Woodward J.R."/>
            <person name="Volckaert G."/>
            <person name="Aert R."/>
            <person name="Robben J."/>
            <person name="Grymonprez B."/>
            <person name="Weltjens I."/>
            <person name="Vanstreels E."/>
            <person name="Rieger M."/>
            <person name="Schaefer M."/>
            <person name="Mueller-Auer S."/>
            <person name="Gabel C."/>
            <person name="Fuchs M."/>
            <person name="Duesterhoeft A."/>
            <person name="Fritzc C."/>
            <person name="Holzer E."/>
            <person name="Moestl D."/>
            <person name="Hilbert H."/>
            <person name="Borzym K."/>
            <person name="Langer I."/>
            <person name="Beck A."/>
            <person name="Lehrach H."/>
            <person name="Reinhardt R."/>
            <person name="Pohl T.M."/>
            <person name="Eger P."/>
            <person name="Zimmermann W."/>
            <person name="Wedler H."/>
            <person name="Wambutt R."/>
            <person name="Purnelle B."/>
            <person name="Goffeau A."/>
            <person name="Cadieu E."/>
            <person name="Dreano S."/>
            <person name="Gloux S."/>
            <person name="Lelaure V."/>
            <person name="Mottier S."/>
            <person name="Galibert F."/>
            <person name="Aves S.J."/>
            <person name="Xiang Z."/>
            <person name="Hunt C."/>
            <person name="Moore K."/>
            <person name="Hurst S.M."/>
            <person name="Lucas M."/>
            <person name="Rochet M."/>
            <person name="Gaillardin C."/>
            <person name="Tallada V.A."/>
            <person name="Garzon A."/>
            <person name="Thode G."/>
            <person name="Daga R.R."/>
            <person name="Cruzado L."/>
            <person name="Jimenez J."/>
            <person name="Sanchez M."/>
            <person name="del Rey F."/>
            <person name="Benito J."/>
            <person name="Dominguez A."/>
            <person name="Revuelta J.L."/>
            <person name="Moreno S."/>
            <person name="Armstrong J."/>
            <person name="Forsburg S.L."/>
            <person name="Cerutti L."/>
            <person name="Lowe T."/>
            <person name="McCombie W.R."/>
            <person name="Paulsen I."/>
            <person name="Potashkin J."/>
            <person name="Shpakovski G.V."/>
            <person name="Ussery D."/>
            <person name="Barrell B.G."/>
            <person name="Nurse P."/>
        </authorList>
    </citation>
    <scope>NUCLEOTIDE SEQUENCE [LARGE SCALE GENOMIC DNA]</scope>
    <source>
        <strain>972 / ATCC 24843</strain>
    </source>
</reference>
<reference key="2">
    <citation type="journal article" date="1997" name="DNA Res.">
        <title>Identification of open reading frames in Schizosaccharomyces pombe cDNAs.</title>
        <authorList>
            <person name="Yoshioka S."/>
            <person name="Kato K."/>
            <person name="Nakai K."/>
            <person name="Okayama H."/>
            <person name="Nojima H."/>
        </authorList>
    </citation>
    <scope>NUCLEOTIDE SEQUENCE [LARGE SCALE MRNA] OF 305-684</scope>
    <source>
        <strain>PR745</strain>
    </source>
</reference>
<accession>Q9P7W6</accession>
<accession>P78862</accession>